<feature type="chain" id="PRO_0000310278" description="P2Y purinoceptor 14">
    <location>
        <begin position="1"/>
        <end position="337"/>
    </location>
</feature>
<feature type="topological domain" description="Extracellular" evidence="2">
    <location>
        <begin position="1"/>
        <end position="28"/>
    </location>
</feature>
<feature type="transmembrane region" description="Helical; Name=1" evidence="2">
    <location>
        <begin position="29"/>
        <end position="49"/>
    </location>
</feature>
<feature type="topological domain" description="Cytoplasmic" evidence="2">
    <location>
        <begin position="50"/>
        <end position="54"/>
    </location>
</feature>
<feature type="transmembrane region" description="Helical; Name=2" evidence="2">
    <location>
        <begin position="55"/>
        <end position="75"/>
    </location>
</feature>
<feature type="topological domain" description="Extracellular" evidence="2">
    <location>
        <begin position="76"/>
        <end position="95"/>
    </location>
</feature>
<feature type="transmembrane region" description="Helical; Name=3" evidence="2">
    <location>
        <begin position="96"/>
        <end position="116"/>
    </location>
</feature>
<feature type="topological domain" description="Cytoplasmic" evidence="2">
    <location>
        <begin position="117"/>
        <end position="138"/>
    </location>
</feature>
<feature type="transmembrane region" description="Helical; Name=4" evidence="2">
    <location>
        <begin position="139"/>
        <end position="159"/>
    </location>
</feature>
<feature type="topological domain" description="Extracellular" evidence="2">
    <location>
        <begin position="160"/>
        <end position="187"/>
    </location>
</feature>
<feature type="transmembrane region" description="Helical; Name=5" evidence="2">
    <location>
        <begin position="188"/>
        <end position="208"/>
    </location>
</feature>
<feature type="topological domain" description="Cytoplasmic" evidence="2">
    <location>
        <begin position="209"/>
        <end position="233"/>
    </location>
</feature>
<feature type="transmembrane region" description="Helical; Name=6" evidence="2">
    <location>
        <begin position="234"/>
        <end position="254"/>
    </location>
</feature>
<feature type="topological domain" description="Extracellular" evidence="2">
    <location>
        <begin position="255"/>
        <end position="277"/>
    </location>
</feature>
<feature type="transmembrane region" description="Helical; Name=7" evidence="2">
    <location>
        <begin position="278"/>
        <end position="298"/>
    </location>
</feature>
<feature type="topological domain" description="Cytoplasmic" evidence="2">
    <location>
        <begin position="299"/>
        <end position="337"/>
    </location>
</feature>
<feature type="glycosylation site" description="N-linked (GlcNAc...) asparagine" evidence="2">
    <location>
        <position position="2"/>
    </location>
</feature>
<feature type="glycosylation site" description="N-linked (GlcNAc...) asparagine" evidence="2">
    <location>
        <position position="162"/>
    </location>
</feature>
<feature type="disulfide bond" evidence="3">
    <location>
        <begin position="93"/>
        <end position="171"/>
    </location>
</feature>
<organism>
    <name type="scientific">Bos taurus</name>
    <name type="common">Bovine</name>
    <dbReference type="NCBI Taxonomy" id="9913"/>
    <lineage>
        <taxon>Eukaryota</taxon>
        <taxon>Metazoa</taxon>
        <taxon>Chordata</taxon>
        <taxon>Craniata</taxon>
        <taxon>Vertebrata</taxon>
        <taxon>Euteleostomi</taxon>
        <taxon>Mammalia</taxon>
        <taxon>Eutheria</taxon>
        <taxon>Laurasiatheria</taxon>
        <taxon>Artiodactyla</taxon>
        <taxon>Ruminantia</taxon>
        <taxon>Pecora</taxon>
        <taxon>Bovidae</taxon>
        <taxon>Bovinae</taxon>
        <taxon>Bos</taxon>
    </lineage>
</organism>
<gene>
    <name type="primary">P2RY14</name>
</gene>
<accession>Q3SX17</accession>
<comment type="function">
    <text evidence="1">Receptor for UDP-glucose and other UDP-sugar coupled to G-proteins. Not activated by ATP, ADP, UTP or ATP (By similarity).</text>
</comment>
<comment type="subcellular location">
    <subcellularLocation>
        <location>Cell membrane</location>
        <topology>Multi-pass membrane protein</topology>
    </subcellularLocation>
</comment>
<comment type="similarity">
    <text evidence="3">Belongs to the G-protein coupled receptor 1 family.</text>
</comment>
<keyword id="KW-1003">Cell membrane</keyword>
<keyword id="KW-1015">Disulfide bond</keyword>
<keyword id="KW-0297">G-protein coupled receptor</keyword>
<keyword id="KW-0325">Glycoprotein</keyword>
<keyword id="KW-0472">Membrane</keyword>
<keyword id="KW-0675">Receptor</keyword>
<keyword id="KW-1185">Reference proteome</keyword>
<keyword id="KW-0807">Transducer</keyword>
<keyword id="KW-0812">Transmembrane</keyword>
<keyword id="KW-1133">Transmembrane helix</keyword>
<reference key="1">
    <citation type="journal article" date="2005" name="BMC Genomics">
        <title>Characterization of 954 bovine full-CDS cDNA sequences.</title>
        <authorList>
            <person name="Harhay G.P."/>
            <person name="Sonstegard T.S."/>
            <person name="Keele J.W."/>
            <person name="Heaton M.P."/>
            <person name="Clawson M.L."/>
            <person name="Snelling W.M."/>
            <person name="Wiedmann R.T."/>
            <person name="Van Tassell C.P."/>
            <person name="Smith T.P.L."/>
        </authorList>
    </citation>
    <scope>NUCLEOTIDE SEQUENCE [LARGE SCALE MRNA]</scope>
</reference>
<reference key="2">
    <citation type="submission" date="2005-09" db="EMBL/GenBank/DDBJ databases">
        <authorList>
            <consortium name="NIH - Mammalian Gene Collection (MGC) project"/>
        </authorList>
    </citation>
    <scope>NUCLEOTIDE SEQUENCE [LARGE SCALE MRNA]</scope>
    <source>
        <strain>Hereford</strain>
        <tissue>Ascending colon</tissue>
    </source>
</reference>
<evidence type="ECO:0000250" key="1"/>
<evidence type="ECO:0000255" key="2"/>
<evidence type="ECO:0000255" key="3">
    <source>
        <dbReference type="PROSITE-ProRule" id="PRU00521"/>
    </source>
</evidence>
<dbReference type="EMBL" id="BT030704">
    <property type="protein sequence ID" value="ABS45020.1"/>
    <property type="molecule type" value="mRNA"/>
</dbReference>
<dbReference type="EMBL" id="BC104556">
    <property type="protein sequence ID" value="AAI04557.1"/>
    <property type="molecule type" value="mRNA"/>
</dbReference>
<dbReference type="RefSeq" id="NP_001070477.1">
    <property type="nucleotide sequence ID" value="NM_001077009.1"/>
</dbReference>
<dbReference type="RefSeq" id="XP_005201886.1">
    <property type="nucleotide sequence ID" value="XM_005201829.5"/>
</dbReference>
<dbReference type="RefSeq" id="XP_005201887.1">
    <property type="nucleotide sequence ID" value="XM_005201830.3"/>
</dbReference>
<dbReference type="RefSeq" id="XP_010799800.1">
    <property type="nucleotide sequence ID" value="XM_010801498.4"/>
</dbReference>
<dbReference type="RefSeq" id="XP_010799801.1">
    <property type="nucleotide sequence ID" value="XM_010801499.2"/>
</dbReference>
<dbReference type="RefSeq" id="XP_010799802.1">
    <property type="nucleotide sequence ID" value="XM_010801500.4"/>
</dbReference>
<dbReference type="RefSeq" id="XP_015328558.1">
    <property type="nucleotide sequence ID" value="XM_015473072.1"/>
</dbReference>
<dbReference type="RefSeq" id="XP_015328559.1">
    <property type="nucleotide sequence ID" value="XM_015473073.1"/>
</dbReference>
<dbReference type="RefSeq" id="XP_015328560.1">
    <property type="nucleotide sequence ID" value="XM_015473074.1"/>
</dbReference>
<dbReference type="RefSeq" id="XP_024848174.1">
    <property type="nucleotide sequence ID" value="XM_024992406.2"/>
</dbReference>
<dbReference type="RefSeq" id="XP_059742835.1">
    <property type="nucleotide sequence ID" value="XM_059886852.1"/>
</dbReference>
<dbReference type="RefSeq" id="XP_059742837.1">
    <property type="nucleotide sequence ID" value="XM_059886854.1"/>
</dbReference>
<dbReference type="RefSeq" id="XP_059742841.1">
    <property type="nucleotide sequence ID" value="XM_059886858.1"/>
</dbReference>
<dbReference type="RefSeq" id="XP_059742845.1">
    <property type="nucleotide sequence ID" value="XM_059886862.1"/>
</dbReference>
<dbReference type="RefSeq" id="XP_059742848.1">
    <property type="nucleotide sequence ID" value="XM_059886865.1"/>
</dbReference>
<dbReference type="SMR" id="Q3SX17"/>
<dbReference type="FunCoup" id="Q3SX17">
    <property type="interactions" value="68"/>
</dbReference>
<dbReference type="STRING" id="9913.ENSBTAP00000027950"/>
<dbReference type="GlyCosmos" id="Q3SX17">
    <property type="glycosylation" value="2 sites, No reported glycans"/>
</dbReference>
<dbReference type="GlyGen" id="Q3SX17">
    <property type="glycosylation" value="2 sites"/>
</dbReference>
<dbReference type="PaxDb" id="9913-ENSBTAP00000027950"/>
<dbReference type="Ensembl" id="ENSBTAT00000092049.1">
    <property type="protein sequence ID" value="ENSBTAP00000101726.1"/>
    <property type="gene ID" value="ENSBTAG00000020990.6"/>
</dbReference>
<dbReference type="Ensembl" id="ENSBTAT00000102525.1">
    <property type="protein sequence ID" value="ENSBTAP00000092466.1"/>
    <property type="gene ID" value="ENSBTAG00000020990.6"/>
</dbReference>
<dbReference type="Ensembl" id="ENSBTAT00000106487.1">
    <property type="protein sequence ID" value="ENSBTAP00000100311.1"/>
    <property type="gene ID" value="ENSBTAG00000020990.6"/>
</dbReference>
<dbReference type="Ensembl" id="ENSBTAT00000106665.1">
    <property type="protein sequence ID" value="ENSBTAP00000092467.1"/>
    <property type="gene ID" value="ENSBTAG00000020990.6"/>
</dbReference>
<dbReference type="Ensembl" id="ENSBTAT00000113716.1">
    <property type="protein sequence ID" value="ENSBTAP00000097335.1"/>
    <property type="gene ID" value="ENSBTAG00000020990.6"/>
</dbReference>
<dbReference type="Ensembl" id="ENSBTAT00000115613.1">
    <property type="protein sequence ID" value="ENSBTAP00000087097.1"/>
    <property type="gene ID" value="ENSBTAG00000020990.6"/>
</dbReference>
<dbReference type="Ensembl" id="ENSBTAT00000126068.1">
    <property type="protein sequence ID" value="ENSBTAP00000098832.1"/>
    <property type="gene ID" value="ENSBTAG00000020990.6"/>
</dbReference>
<dbReference type="Ensembl" id="ENSBTAT00000127139.1">
    <property type="protein sequence ID" value="ENSBTAP00000080428.1"/>
    <property type="gene ID" value="ENSBTAG00000020990.6"/>
</dbReference>
<dbReference type="Ensembl" id="ENSBTAT00000134548.1">
    <property type="protein sequence ID" value="ENSBTAP00000091912.1"/>
    <property type="gene ID" value="ENSBTAG00000020990.6"/>
</dbReference>
<dbReference type="GeneID" id="767936"/>
<dbReference type="KEGG" id="bta:767936"/>
<dbReference type="CTD" id="9934"/>
<dbReference type="VEuPathDB" id="HostDB:ENSBTAG00000020990"/>
<dbReference type="VGNC" id="VGNC:32527">
    <property type="gene designation" value="P2RY14"/>
</dbReference>
<dbReference type="eggNOG" id="ENOG502R537">
    <property type="taxonomic scope" value="Eukaryota"/>
</dbReference>
<dbReference type="GeneTree" id="ENSGT01110000267255"/>
<dbReference type="HOGENOM" id="CLU_009579_8_2_1"/>
<dbReference type="InParanoid" id="Q3SX17"/>
<dbReference type="OMA" id="FVHTVNY"/>
<dbReference type="OrthoDB" id="6163051at2759"/>
<dbReference type="TreeFam" id="TF330969"/>
<dbReference type="Reactome" id="R-BTA-417957">
    <property type="pathway name" value="P2Y receptors"/>
</dbReference>
<dbReference type="Reactome" id="R-BTA-418594">
    <property type="pathway name" value="G alpha (i) signalling events"/>
</dbReference>
<dbReference type="Proteomes" id="UP000009136">
    <property type="component" value="Chromosome 1"/>
</dbReference>
<dbReference type="Bgee" id="ENSBTAG00000020990">
    <property type="expression patterns" value="Expressed in thyroid gland and 95 other cell types or tissues"/>
</dbReference>
<dbReference type="GO" id="GO:0005886">
    <property type="term" value="C:plasma membrane"/>
    <property type="evidence" value="ECO:0007669"/>
    <property type="project" value="UniProtKB-SubCell"/>
</dbReference>
<dbReference type="GO" id="GO:0045028">
    <property type="term" value="F:G protein-coupled purinergic nucleotide receptor activity"/>
    <property type="evidence" value="ECO:0000318"/>
    <property type="project" value="GO_Central"/>
</dbReference>
<dbReference type="GO" id="GO:0007186">
    <property type="term" value="P:G protein-coupled receptor signaling pathway"/>
    <property type="evidence" value="ECO:0000318"/>
    <property type="project" value="GO_Central"/>
</dbReference>
<dbReference type="FunFam" id="1.20.1070.10:FF:000049">
    <property type="entry name" value="G-protein coupled receptor 87"/>
    <property type="match status" value="1"/>
</dbReference>
<dbReference type="Gene3D" id="1.20.1070.10">
    <property type="entry name" value="Rhodopsin 7-helix transmembrane proteins"/>
    <property type="match status" value="1"/>
</dbReference>
<dbReference type="InterPro" id="IPR000276">
    <property type="entry name" value="GPCR_Rhodpsn"/>
</dbReference>
<dbReference type="InterPro" id="IPR017452">
    <property type="entry name" value="GPCR_Rhodpsn_7TM"/>
</dbReference>
<dbReference type="InterPro" id="IPR005466">
    <property type="entry name" value="P2Y14_rcpt"/>
</dbReference>
<dbReference type="PANTHER" id="PTHR24233:SF3">
    <property type="entry name" value="P2Y PURINOCEPTOR 14"/>
    <property type="match status" value="1"/>
</dbReference>
<dbReference type="PANTHER" id="PTHR24233">
    <property type="entry name" value="P2Y PURINOCEPTOR-RELATED G-PROTEIN COUPLED RECEPTOR"/>
    <property type="match status" value="1"/>
</dbReference>
<dbReference type="Pfam" id="PF00001">
    <property type="entry name" value="7tm_1"/>
    <property type="match status" value="1"/>
</dbReference>
<dbReference type="PRINTS" id="PR00237">
    <property type="entry name" value="GPCRRHODOPSN"/>
</dbReference>
<dbReference type="PRINTS" id="PR01157">
    <property type="entry name" value="P2YPURNOCPTR"/>
</dbReference>
<dbReference type="PRINTS" id="PR01655">
    <property type="entry name" value="UDPGLUCOSER"/>
</dbReference>
<dbReference type="SUPFAM" id="SSF81321">
    <property type="entry name" value="Family A G protein-coupled receptor-like"/>
    <property type="match status" value="1"/>
</dbReference>
<dbReference type="PROSITE" id="PS50262">
    <property type="entry name" value="G_PROTEIN_RECEP_F1_2"/>
    <property type="match status" value="1"/>
</dbReference>
<protein>
    <recommendedName>
        <fullName>P2Y purinoceptor 14</fullName>
        <shortName>P2Y14</shortName>
    </recommendedName>
    <alternativeName>
        <fullName>UDP-glucose receptor</fullName>
    </alternativeName>
</protein>
<proteinExistence type="evidence at transcript level"/>
<sequence>MNATSVPPAEGSCPSNALITKQIIPMLYFVVFVAGILLNGMSGWVFFYVPSSKSFIVYLKNIVIADFLMSLTFPFKILGDLGLGLWQVKVFVCRVSAVLFYINMYVSIVFFGLIGFDRYYKIVKPLLTSFIQSISYSKLLSVLVWSLTLLIALPNMILTNRNVTEATRVKCMDLKSDLGLKWHKASSYIFVGIFWIVFLSLIIFYTAITKKIFKSHFKSRKNSVSVKKKSSRNIFSIMFVFFICFVPYHIARIPYTQSQTEAHYSCQSKQILFYVKEFSLLLSAANVCLDPIIYFFLCQPFREVLCKKLHIQLKTQHDSETSKIKRENIIQESTDTL</sequence>
<name>P2Y14_BOVIN</name>